<gene>
    <name type="primary">TRS120</name>
    <name type="ordered locus">YDR407C</name>
    <name type="ORF">D9509.25</name>
    <name type="ORF">ESBP10</name>
</gene>
<evidence type="ECO:0000256" key="1">
    <source>
        <dbReference type="SAM" id="MobiDB-lite"/>
    </source>
</evidence>
<evidence type="ECO:0000269" key="2">
    <source>
    </source>
</evidence>
<evidence type="ECO:0000269" key="3">
    <source>
    </source>
</evidence>
<evidence type="ECO:0000269" key="4">
    <source>
    </source>
</evidence>
<evidence type="ECO:0000269" key="5">
    <source>
    </source>
</evidence>
<evidence type="ECO:0000269" key="6">
    <source>
    </source>
</evidence>
<evidence type="ECO:0000305" key="7"/>
<evidence type="ECO:0007744" key="8">
    <source>
    </source>
</evidence>
<protein>
    <recommendedName>
        <fullName>Trafficking protein particle complex II-specific subunit 120</fullName>
        <shortName>TRAPP II-specific subunit 120</shortName>
    </recommendedName>
    <alternativeName>
        <fullName>Transport protein particle 120 kDa subunit</fullName>
    </alternativeName>
</protein>
<sequence>MNILKHFPSYVGPSKIRTLVIPIGHWTRKEFNNAVQKLSEFNEIHLSDVTPIDSPIFTPQGFPHGKLFFDFLTIDHDDALELFLYDFEPFRKTFVIIGLVNDYSDPLTNLNFMKEKYPTLISPNLVYASSTPTKELEQTIDTMENVFASSPDMQKNIETIMCDIARNFLTALNSYYSSYKHVTLRSPGAIGGNAVLKTTLIRQNSYTSSSSSTPMSAVQSSVSSSSKAGSVTTASKRLSSFEMTTNSLKRSASLKLATTLSTSENRSQQKSLGRQMKILGNFQLLAGRYVDALNSFVDAITTLYKVRDYLWLGSALDGISICFLLLSYLGLSYQIPQIVSLICPVEKLNFESSSTGISPVDSNSKATASTTASSTPRNSISIAAMQSPRNSIMSLSAPALNIDVENINLPLLIKCISDKVLYYYDLSLMHNSEYAPQVVYCEFLLKTLTFMTSCYKSSEFSKDVLDNIVKNQHRALSDIPNSPMFPRFEVYFYSNKLFELQLKEMQVEAQIKIYSTMAEVYRLLGYKRKQLFVLRLLMVALLATPNKIAWHPDYRTLIDTIIELLNINESEAKINVDDPSQSTWLILQKKILQLCIKVSRKINDFEYVAKFSSILITKYTHLLNQSEQDALFKEYIQPSITNESITSYWDPFILREVVINRILDSDPTSNEIPLESDVSSLESLENRQKTQDINPQEVFNPFKRVQPTSFVSNNSTKVPILVFLVGDKAEFTCRVQNPFKFDFTINDIQLDEEISEFCEIDRKAVSYSGPYNVKAESIRSITLPLIIKKPTYKKIYEISCLKISILKLPLQKFDIINDSRRSNPVEEEAEYSKCIYGKLKIKILPEQPQLELLSTSKMTRNSWMMLDGTKTDFHITVRNKSLSCAINHIKIIPMNNIEQMLKPDYWKKMPPDDLYIMEKQLDWLSKSCVRIIKLPTVIKPNETITFDLELDNTAVPFNFTGFDLLIEYGMSATDESCIYLKKLSIPYEVTLRRTIEVPSMDIIPLNELFSSQVENVDWIEYVMSKIRAESNLHSRDFILLLLDFRNSWIDGIKLNVQFEDFTSNEYHVEASHTSRIIVPIKKIDYKKYNFENTPIPRIYPGRQFIQSGLNEEQTIEMRQKFWCREHIISKLKCNWKLTTDQSVTGSVDFNKFIEKFDHKMVYTIYPGRLFYGVQLLLDEPKVKVGEIINLKIITEPTSTCRRKQNSTVNFLDIVIFDSKTSKILPRSNRRILYNGSLTKPISTTKVSEINLEIIPIEKGRYEFSVCISKSNNQDGIIQFDSENVILSVI</sequence>
<name>TR120_YEAST</name>
<accession>Q04183</accession>
<accession>D6VT39</accession>
<accession>Q05731</accession>
<feature type="chain" id="PRO_0000076355" description="Trafficking protein particle complex II-specific subunit 120">
    <location>
        <begin position="1"/>
        <end position="1289"/>
    </location>
</feature>
<feature type="region of interest" description="Disordered" evidence="1">
    <location>
        <begin position="354"/>
        <end position="374"/>
    </location>
</feature>
<feature type="compositionally biased region" description="Polar residues" evidence="1">
    <location>
        <begin position="354"/>
        <end position="365"/>
    </location>
</feature>
<feature type="modified residue" description="Phosphoserine" evidence="8">
    <location>
        <position position="379"/>
    </location>
</feature>
<feature type="modified residue" description="Phosphoserine" evidence="8">
    <location>
        <position position="387"/>
    </location>
</feature>
<feature type="sequence conflict" description="In Ref. 3; CAA59326." evidence="7" ref="3">
    <original>A</original>
    <variation>C</variation>
    <location>
        <position position="435"/>
    </location>
</feature>
<reference key="1">
    <citation type="journal article" date="1997" name="Nature">
        <title>The nucleotide sequence of Saccharomyces cerevisiae chromosome IV.</title>
        <authorList>
            <person name="Jacq C."/>
            <person name="Alt-Moerbe J."/>
            <person name="Andre B."/>
            <person name="Arnold W."/>
            <person name="Bahr A."/>
            <person name="Ballesta J.P.G."/>
            <person name="Bargues M."/>
            <person name="Baron L."/>
            <person name="Becker A."/>
            <person name="Biteau N."/>
            <person name="Bloecker H."/>
            <person name="Blugeon C."/>
            <person name="Boskovic J."/>
            <person name="Brandt P."/>
            <person name="Brueckner M."/>
            <person name="Buitrago M.J."/>
            <person name="Coster F."/>
            <person name="Delaveau T."/>
            <person name="del Rey F."/>
            <person name="Dujon B."/>
            <person name="Eide L.G."/>
            <person name="Garcia-Cantalejo J.M."/>
            <person name="Goffeau A."/>
            <person name="Gomez-Peris A."/>
            <person name="Granotier C."/>
            <person name="Hanemann V."/>
            <person name="Hankeln T."/>
            <person name="Hoheisel J.D."/>
            <person name="Jaeger W."/>
            <person name="Jimenez A."/>
            <person name="Jonniaux J.-L."/>
            <person name="Kraemer C."/>
            <person name="Kuester H."/>
            <person name="Laamanen P."/>
            <person name="Legros Y."/>
            <person name="Louis E.J."/>
            <person name="Moeller-Rieker S."/>
            <person name="Monnet A."/>
            <person name="Moro M."/>
            <person name="Mueller-Auer S."/>
            <person name="Nussbaumer B."/>
            <person name="Paricio N."/>
            <person name="Paulin L."/>
            <person name="Perea J."/>
            <person name="Perez-Alonso M."/>
            <person name="Perez-Ortin J.E."/>
            <person name="Pohl T.M."/>
            <person name="Prydz H."/>
            <person name="Purnelle B."/>
            <person name="Rasmussen S.W."/>
            <person name="Remacha M.A."/>
            <person name="Revuelta J.L."/>
            <person name="Rieger M."/>
            <person name="Salom D."/>
            <person name="Saluz H.P."/>
            <person name="Saiz J.E."/>
            <person name="Saren A.-M."/>
            <person name="Schaefer M."/>
            <person name="Scharfe M."/>
            <person name="Schmidt E.R."/>
            <person name="Schneider C."/>
            <person name="Scholler P."/>
            <person name="Schwarz S."/>
            <person name="Soler-Mira A."/>
            <person name="Urrestarazu L.A."/>
            <person name="Verhasselt P."/>
            <person name="Vissers S."/>
            <person name="Voet M."/>
            <person name="Volckaert G."/>
            <person name="Wagner G."/>
            <person name="Wambutt R."/>
            <person name="Wedler E."/>
            <person name="Wedler H."/>
            <person name="Woelfl S."/>
            <person name="Harris D.E."/>
            <person name="Bowman S."/>
            <person name="Brown D."/>
            <person name="Churcher C.M."/>
            <person name="Connor R."/>
            <person name="Dedman K."/>
            <person name="Gentles S."/>
            <person name="Hamlin N."/>
            <person name="Hunt S."/>
            <person name="Jones L."/>
            <person name="McDonald S."/>
            <person name="Murphy L.D."/>
            <person name="Niblett D."/>
            <person name="Odell C."/>
            <person name="Oliver K."/>
            <person name="Rajandream M.A."/>
            <person name="Richards C."/>
            <person name="Shore L."/>
            <person name="Walsh S.V."/>
            <person name="Barrell B.G."/>
            <person name="Dietrich F.S."/>
            <person name="Mulligan J.T."/>
            <person name="Allen E."/>
            <person name="Araujo R."/>
            <person name="Aviles E."/>
            <person name="Berno A."/>
            <person name="Carpenter J."/>
            <person name="Chen E."/>
            <person name="Cherry J.M."/>
            <person name="Chung E."/>
            <person name="Duncan M."/>
            <person name="Hunicke-Smith S."/>
            <person name="Hyman R.W."/>
            <person name="Komp C."/>
            <person name="Lashkari D."/>
            <person name="Lew H."/>
            <person name="Lin D."/>
            <person name="Mosedale D."/>
            <person name="Nakahara K."/>
            <person name="Namath A."/>
            <person name="Oefner P."/>
            <person name="Oh C."/>
            <person name="Petel F.X."/>
            <person name="Roberts D."/>
            <person name="Schramm S."/>
            <person name="Schroeder M."/>
            <person name="Shogren T."/>
            <person name="Shroff N."/>
            <person name="Winant A."/>
            <person name="Yelton M.A."/>
            <person name="Botstein D."/>
            <person name="Davis R.W."/>
            <person name="Johnston M."/>
            <person name="Andrews S."/>
            <person name="Brinkman R."/>
            <person name="Cooper J."/>
            <person name="Ding H."/>
            <person name="Du Z."/>
            <person name="Favello A."/>
            <person name="Fulton L."/>
            <person name="Gattung S."/>
            <person name="Greco T."/>
            <person name="Hallsworth K."/>
            <person name="Hawkins J."/>
            <person name="Hillier L.W."/>
            <person name="Jier M."/>
            <person name="Johnson D."/>
            <person name="Johnston L."/>
            <person name="Kirsten J."/>
            <person name="Kucaba T."/>
            <person name="Langston Y."/>
            <person name="Latreille P."/>
            <person name="Le T."/>
            <person name="Mardis E."/>
            <person name="Menezes S."/>
            <person name="Miller N."/>
            <person name="Nhan M."/>
            <person name="Pauley A."/>
            <person name="Peluso D."/>
            <person name="Rifkin L."/>
            <person name="Riles L."/>
            <person name="Taich A."/>
            <person name="Trevaskis E."/>
            <person name="Vignati D."/>
            <person name="Wilcox L."/>
            <person name="Wohldman P."/>
            <person name="Vaudin M."/>
            <person name="Wilson R."/>
            <person name="Waterston R."/>
            <person name="Albermann K."/>
            <person name="Hani J."/>
            <person name="Heumann K."/>
            <person name="Kleine K."/>
            <person name="Mewes H.-W."/>
            <person name="Zollner A."/>
            <person name="Zaccaria P."/>
        </authorList>
    </citation>
    <scope>NUCLEOTIDE SEQUENCE [LARGE SCALE GENOMIC DNA]</scope>
    <source>
        <strain>ATCC 204508 / S288c</strain>
    </source>
</reference>
<reference key="2">
    <citation type="journal article" date="2014" name="G3 (Bethesda)">
        <title>The reference genome sequence of Saccharomyces cerevisiae: Then and now.</title>
        <authorList>
            <person name="Engel S.R."/>
            <person name="Dietrich F.S."/>
            <person name="Fisk D.G."/>
            <person name="Binkley G."/>
            <person name="Balakrishnan R."/>
            <person name="Costanzo M.C."/>
            <person name="Dwight S.S."/>
            <person name="Hitz B.C."/>
            <person name="Karra K."/>
            <person name="Nash R.S."/>
            <person name="Weng S."/>
            <person name="Wong E.D."/>
            <person name="Lloyd P."/>
            <person name="Skrzypek M.S."/>
            <person name="Miyasato S.R."/>
            <person name="Simison M."/>
            <person name="Cherry J.M."/>
        </authorList>
    </citation>
    <scope>GENOME REANNOTATION</scope>
    <source>
        <strain>ATCC 204508 / S288c</strain>
    </source>
</reference>
<reference key="3">
    <citation type="submission" date="1995-02" db="EMBL/GenBank/DDBJ databases">
        <authorList>
            <person name="Mai B."/>
            <person name="Lipp M."/>
        </authorList>
    </citation>
    <scope>NUCLEOTIDE SEQUENCE [GENOMIC DNA] OF 40-731</scope>
</reference>
<reference key="4">
    <citation type="journal article" date="1998" name="EMBO J.">
        <title>TRAPP, a highly conserved novel complex on the cis-Golgi that mediates vesicle docking and fusion.</title>
        <authorList>
            <person name="Sacher M."/>
            <person name="Jiang Y."/>
            <person name="Barrowman J."/>
            <person name="Scarpa A."/>
            <person name="Burston J."/>
            <person name="Zhang L."/>
            <person name="Schieltz D."/>
            <person name="Yates J.R. III"/>
            <person name="Abeliovich H."/>
            <person name="Ferro-Novick S."/>
        </authorList>
    </citation>
    <scope>IDENTIFICATION IN THE TRAPP II COMPLEX</scope>
</reference>
<reference key="5">
    <citation type="journal article" date="2001" name="Mol. Cell">
        <title>TRAPP I implicated in the specificity of tethering in ER-to-Golgi transport.</title>
        <authorList>
            <person name="Sacher M."/>
            <person name="Barrowman J."/>
            <person name="Wang W."/>
            <person name="Horecka J."/>
            <person name="Zhang Y."/>
            <person name="Pypaert M."/>
            <person name="Ferro-Novick S."/>
        </authorList>
    </citation>
    <scope>FUNCTION OF THE TRAPP II COMPLEX</scope>
    <scope>IDENTIFICATION IN THE TRAPP II COMPLEX</scope>
    <scope>SUBCELLULAR LOCATION</scope>
</reference>
<reference key="6">
    <citation type="journal article" date="2003" name="Nature">
        <title>Global analysis of protein expression in yeast.</title>
        <authorList>
            <person name="Ghaemmaghami S."/>
            <person name="Huh W.-K."/>
            <person name="Bower K."/>
            <person name="Howson R.W."/>
            <person name="Belle A."/>
            <person name="Dephoure N."/>
            <person name="O'Shea E.K."/>
            <person name="Weissman J.S."/>
        </authorList>
    </citation>
    <scope>LEVEL OF PROTEIN EXPRESSION [LARGE SCALE ANALYSIS]</scope>
</reference>
<reference key="7">
    <citation type="journal article" date="2007" name="J. Proteome Res.">
        <title>Large-scale phosphorylation analysis of alpha-factor-arrested Saccharomyces cerevisiae.</title>
        <authorList>
            <person name="Li X."/>
            <person name="Gerber S.A."/>
            <person name="Rudner A.D."/>
            <person name="Beausoleil S.A."/>
            <person name="Haas W."/>
            <person name="Villen J."/>
            <person name="Elias J.E."/>
            <person name="Gygi S.P."/>
        </authorList>
    </citation>
    <scope>IDENTIFICATION BY MASS SPECTROMETRY [LARGE SCALE ANALYSIS]</scope>
    <source>
        <strain>ADR376</strain>
    </source>
</reference>
<reference key="8">
    <citation type="journal article" date="2007" name="Mol. Biol. Cell">
        <title>The role of Trs65 in the Ypt/Rab guanine nucleotide exchange factor function of the TRAPP II complex.</title>
        <authorList>
            <person name="Liang Y."/>
            <person name="Morozova N."/>
            <person name="Tokarev A.A."/>
            <person name="Mulholland J.W."/>
            <person name="Segev N."/>
        </authorList>
    </citation>
    <scope>FUNCTION</scope>
    <scope>INTERACTION WITH TRS65</scope>
</reference>
<reference key="9">
    <citation type="journal article" date="2008" name="Mol. Cell. Proteomics">
        <title>A multidimensional chromatography technology for in-depth phosphoproteome analysis.</title>
        <authorList>
            <person name="Albuquerque C.P."/>
            <person name="Smolka M.B."/>
            <person name="Payne S.H."/>
            <person name="Bafna V."/>
            <person name="Eng J."/>
            <person name="Zhou H."/>
        </authorList>
    </citation>
    <scope>IDENTIFICATION BY MASS SPECTROMETRY [LARGE SCALE ANALYSIS]</scope>
</reference>
<reference key="10">
    <citation type="journal article" date="2009" name="Science">
        <title>Global analysis of Cdk1 substrate phosphorylation sites provides insights into evolution.</title>
        <authorList>
            <person name="Holt L.J."/>
            <person name="Tuch B.B."/>
            <person name="Villen J."/>
            <person name="Johnson A.D."/>
            <person name="Gygi S.P."/>
            <person name="Morgan D.O."/>
        </authorList>
    </citation>
    <scope>PHOSPHORYLATION [LARGE SCALE ANALYSIS] AT SER-379 AND SER-387</scope>
    <scope>IDENTIFICATION BY MASS SPECTROMETRY [LARGE SCALE ANALYSIS]</scope>
</reference>
<reference key="11">
    <citation type="journal article" date="2010" name="Nat. Struct. Mol. Biol.">
        <title>Molecular architecture of the TRAPPII complex and implications for vesicle tethering.</title>
        <authorList>
            <person name="Yip C.K."/>
            <person name="Berscheminski J."/>
            <person name="Walz T."/>
        </authorList>
    </citation>
    <scope>IDENTIFICATION IN THE TRAP II COMPLEX</scope>
    <scope>FUNCTION OF THE TRAP II COMPLEX</scope>
</reference>
<keyword id="KW-0002">3D-structure</keyword>
<keyword id="KW-0333">Golgi apparatus</keyword>
<keyword id="KW-0597">Phosphoprotein</keyword>
<keyword id="KW-1185">Reference proteome</keyword>
<keyword id="KW-0813">Transport</keyword>
<organism>
    <name type="scientific">Saccharomyces cerevisiae (strain ATCC 204508 / S288c)</name>
    <name type="common">Baker's yeast</name>
    <dbReference type="NCBI Taxonomy" id="559292"/>
    <lineage>
        <taxon>Eukaryota</taxon>
        <taxon>Fungi</taxon>
        <taxon>Dikarya</taxon>
        <taxon>Ascomycota</taxon>
        <taxon>Saccharomycotina</taxon>
        <taxon>Saccharomycetes</taxon>
        <taxon>Saccharomycetales</taxon>
        <taxon>Saccharomycetaceae</taxon>
        <taxon>Saccharomyces</taxon>
    </lineage>
</organism>
<dbReference type="EMBL" id="U32274">
    <property type="protein sequence ID" value="AAB64847.1"/>
    <property type="molecule type" value="Genomic_DNA"/>
</dbReference>
<dbReference type="EMBL" id="X84902">
    <property type="protein sequence ID" value="CAA59326.1"/>
    <property type="status" value="ALT_SEQ"/>
    <property type="molecule type" value="Genomic_DNA"/>
</dbReference>
<dbReference type="EMBL" id="BK006938">
    <property type="protein sequence ID" value="DAA12249.1"/>
    <property type="molecule type" value="Genomic_DNA"/>
</dbReference>
<dbReference type="PIR" id="S69689">
    <property type="entry name" value="S69689"/>
</dbReference>
<dbReference type="RefSeq" id="NP_010695.1">
    <property type="nucleotide sequence ID" value="NM_001180715.1"/>
</dbReference>
<dbReference type="PDB" id="7E2C">
    <property type="method" value="EM"/>
    <property type="resolution" value="4.18 A"/>
    <property type="chains" value="J=1-1289"/>
</dbReference>
<dbReference type="PDB" id="7E2D">
    <property type="method" value="EM"/>
    <property type="resolution" value="3.71 A"/>
    <property type="chains" value="J=1-1289"/>
</dbReference>
<dbReference type="PDB" id="7E8S">
    <property type="method" value="EM"/>
    <property type="resolution" value="4.36 A"/>
    <property type="chains" value="J/U=1-1289"/>
</dbReference>
<dbReference type="PDB" id="7E8T">
    <property type="method" value="EM"/>
    <property type="resolution" value="3.80 A"/>
    <property type="chains" value="J=1-1289"/>
</dbReference>
<dbReference type="PDB" id="7E93">
    <property type="method" value="EM"/>
    <property type="resolution" value="6.54 A"/>
    <property type="chains" value="J/U=1-1289"/>
</dbReference>
<dbReference type="PDB" id="7E94">
    <property type="method" value="EM"/>
    <property type="resolution" value="4.67 A"/>
    <property type="chains" value="J/U=1-1289"/>
</dbReference>
<dbReference type="PDB" id="7EA3">
    <property type="method" value="EM"/>
    <property type="resolution" value="4.31 A"/>
    <property type="chains" value="J/W=1-1289"/>
</dbReference>
<dbReference type="PDB" id="7U05">
    <property type="method" value="EM"/>
    <property type="resolution" value="3.70 A"/>
    <property type="chains" value="A/a=1-1289"/>
</dbReference>
<dbReference type="PDB" id="7U06">
    <property type="method" value="EM"/>
    <property type="resolution" value="4.20 A"/>
    <property type="chains" value="A/a=1-1289"/>
</dbReference>
<dbReference type="PDBsum" id="7E2C"/>
<dbReference type="PDBsum" id="7E2D"/>
<dbReference type="PDBsum" id="7E8S"/>
<dbReference type="PDBsum" id="7E8T"/>
<dbReference type="PDBsum" id="7E93"/>
<dbReference type="PDBsum" id="7E94"/>
<dbReference type="PDBsum" id="7EA3"/>
<dbReference type="PDBsum" id="7U05"/>
<dbReference type="PDBsum" id="7U06"/>
<dbReference type="EMDB" id="EMD-26254"/>
<dbReference type="EMDB" id="EMD-26255"/>
<dbReference type="EMDB" id="EMD-30954"/>
<dbReference type="EMDB" id="EMD-30955"/>
<dbReference type="EMDB" id="EMD-31021"/>
<dbReference type="EMDB" id="EMD-31022"/>
<dbReference type="EMDB" id="EMD-31027"/>
<dbReference type="EMDB" id="EMD-31028"/>
<dbReference type="EMDB" id="EMD-31038"/>
<dbReference type="SMR" id="Q04183"/>
<dbReference type="BioGRID" id="32467">
    <property type="interactions" value="43"/>
</dbReference>
<dbReference type="ComplexPortal" id="CPX-1939">
    <property type="entry name" value="TRAPP II complex"/>
</dbReference>
<dbReference type="DIP" id="DIP-6461N"/>
<dbReference type="FunCoup" id="Q04183">
    <property type="interactions" value="50"/>
</dbReference>
<dbReference type="IntAct" id="Q04183">
    <property type="interactions" value="20"/>
</dbReference>
<dbReference type="MINT" id="Q04183"/>
<dbReference type="STRING" id="4932.YDR407C"/>
<dbReference type="GlyGen" id="Q04183">
    <property type="glycosylation" value="3 sites, 1 O-linked glycan (3 sites)"/>
</dbReference>
<dbReference type="iPTMnet" id="Q04183"/>
<dbReference type="PaxDb" id="4932-YDR407C"/>
<dbReference type="PeptideAtlas" id="Q04183"/>
<dbReference type="EnsemblFungi" id="YDR407C_mRNA">
    <property type="protein sequence ID" value="YDR407C"/>
    <property type="gene ID" value="YDR407C"/>
</dbReference>
<dbReference type="GeneID" id="852016"/>
<dbReference type="KEGG" id="sce:YDR407C"/>
<dbReference type="AGR" id="SGD:S000002815"/>
<dbReference type="SGD" id="S000002815">
    <property type="gene designation" value="TRS120"/>
</dbReference>
<dbReference type="VEuPathDB" id="FungiDB:YDR407C"/>
<dbReference type="eggNOG" id="KOG1953">
    <property type="taxonomic scope" value="Eukaryota"/>
</dbReference>
<dbReference type="GeneTree" id="ENSGT00390000006486"/>
<dbReference type="HOGENOM" id="CLU_002231_0_0_1"/>
<dbReference type="InParanoid" id="Q04183"/>
<dbReference type="OMA" id="EHSRDRM"/>
<dbReference type="OrthoDB" id="27962at2759"/>
<dbReference type="BioCyc" id="YEAST:G3O-29951-MONOMER"/>
<dbReference type="Reactome" id="R-SCE-204005">
    <property type="pathway name" value="COPII-mediated vesicle transport"/>
</dbReference>
<dbReference type="Reactome" id="R-SCE-8876198">
    <property type="pathway name" value="RAB GEFs exchange GTP for GDP on RABs"/>
</dbReference>
<dbReference type="BioGRID-ORCS" id="852016">
    <property type="hits" value="0 hits in 10 CRISPR screens"/>
</dbReference>
<dbReference type="PRO" id="PR:Q04183"/>
<dbReference type="Proteomes" id="UP000002311">
    <property type="component" value="Chromosome IV"/>
</dbReference>
<dbReference type="RNAct" id="Q04183">
    <property type="molecule type" value="protein"/>
</dbReference>
<dbReference type="GO" id="GO:0005829">
    <property type="term" value="C:cytosol"/>
    <property type="evidence" value="ECO:0007669"/>
    <property type="project" value="GOC"/>
</dbReference>
<dbReference type="GO" id="GO:0005769">
    <property type="term" value="C:early endosome"/>
    <property type="evidence" value="ECO:0000314"/>
    <property type="project" value="SGD"/>
</dbReference>
<dbReference type="GO" id="GO:0005802">
    <property type="term" value="C:trans-Golgi network"/>
    <property type="evidence" value="ECO:0000314"/>
    <property type="project" value="SGD"/>
</dbReference>
<dbReference type="GO" id="GO:1990071">
    <property type="term" value="C:TRAPPII protein complex"/>
    <property type="evidence" value="ECO:0000314"/>
    <property type="project" value="SGD"/>
</dbReference>
<dbReference type="GO" id="GO:0034498">
    <property type="term" value="P:early endosome to Golgi transport"/>
    <property type="evidence" value="ECO:0000315"/>
    <property type="project" value="SGD"/>
</dbReference>
<dbReference type="GO" id="GO:0006891">
    <property type="term" value="P:intra-Golgi vesicle-mediated transport"/>
    <property type="evidence" value="ECO:0000315"/>
    <property type="project" value="SGD"/>
</dbReference>
<dbReference type="GO" id="GO:0042147">
    <property type="term" value="P:retrograde transport, endosome to Golgi"/>
    <property type="evidence" value="ECO:0000303"/>
    <property type="project" value="ComplexPortal"/>
</dbReference>
<dbReference type="InterPro" id="IPR013935">
    <property type="entry name" value="TRAPP_II_complex_Trs120"/>
</dbReference>
<dbReference type="PANTHER" id="PTHR21512">
    <property type="entry name" value="TRAFFICKING PROTEIN PARTICLE COMPLEX SUBUNIT 9"/>
    <property type="match status" value="1"/>
</dbReference>
<dbReference type="PANTHER" id="PTHR21512:SF5">
    <property type="entry name" value="TRAFFICKING PROTEIN PARTICLE COMPLEX SUBUNIT 9"/>
    <property type="match status" value="1"/>
</dbReference>
<dbReference type="Pfam" id="PF08626">
    <property type="entry name" value="TRAPPC9-Trs120"/>
    <property type="match status" value="1"/>
</dbReference>
<comment type="function">
    <text evidence="2 4 5">Specific subunit of the TRAPP II complex, a highly conserved vesicle tethering complex that functions in the late Golgi as a guanine nucleotide exchanger (GEF) for the Golgi YPT1 GTPase. TRS120 plays a role in the YPT GEF activity of TRAPP II in concert with the two other TRAPP II-specific subunits TRS65 and TRS130.</text>
</comment>
<comment type="subunit">
    <text evidence="2 4 5 6">Part of the multisubunit TRAPP (transport protein particle) II complex composed of BET3, BET5, TRS20, TRS23, TRS31, TRS33, TRS65, TRS120 and TRS130. Interacts directly with TRS65.</text>
</comment>
<comment type="subcellular location">
    <subcellularLocation>
        <location evidence="2">Golgi apparatus</location>
        <location evidence="2">cis-Golgi network</location>
    </subcellularLocation>
</comment>
<comment type="miscellaneous">
    <text evidence="3">Present with 259 molecules/cell in log phase SD medium.</text>
</comment>
<comment type="similarity">
    <text evidence="7">Belongs to the TRS120 family.</text>
</comment>
<comment type="sequence caution" evidence="7">
    <conflict type="frameshift">
        <sequence resource="EMBL-CDS" id="CAA59326"/>
    </conflict>
</comment>
<proteinExistence type="evidence at protein level"/>